<proteinExistence type="inferred from homology"/>
<protein>
    <recommendedName>
        <fullName evidence="1">S-adenosylmethionine synthase</fullName>
        <shortName evidence="1">AdoMet synthase</shortName>
        <ecNumber evidence="1">2.5.1.6</ecNumber>
    </recommendedName>
    <alternativeName>
        <fullName evidence="1">MAT</fullName>
    </alternativeName>
    <alternativeName>
        <fullName evidence="1">Methionine adenosyltransferase</fullName>
    </alternativeName>
</protein>
<dbReference type="EC" id="2.5.1.6" evidence="1"/>
<dbReference type="EMBL" id="CP000570">
    <property type="protein sequence ID" value="ABN83900.1"/>
    <property type="molecule type" value="Genomic_DNA"/>
</dbReference>
<dbReference type="RefSeq" id="WP_004199069.1">
    <property type="nucleotide sequence ID" value="NC_009074.1"/>
</dbReference>
<dbReference type="SMR" id="A3N4I1"/>
<dbReference type="GeneID" id="93058721"/>
<dbReference type="KEGG" id="bpd:BURPS668_0199"/>
<dbReference type="HOGENOM" id="CLU_041802_1_1_4"/>
<dbReference type="UniPathway" id="UPA00315">
    <property type="reaction ID" value="UER00080"/>
</dbReference>
<dbReference type="GO" id="GO:0005737">
    <property type="term" value="C:cytoplasm"/>
    <property type="evidence" value="ECO:0007669"/>
    <property type="project" value="UniProtKB-SubCell"/>
</dbReference>
<dbReference type="GO" id="GO:0005524">
    <property type="term" value="F:ATP binding"/>
    <property type="evidence" value="ECO:0007669"/>
    <property type="project" value="UniProtKB-UniRule"/>
</dbReference>
<dbReference type="GO" id="GO:0000287">
    <property type="term" value="F:magnesium ion binding"/>
    <property type="evidence" value="ECO:0007669"/>
    <property type="project" value="UniProtKB-UniRule"/>
</dbReference>
<dbReference type="GO" id="GO:0004478">
    <property type="term" value="F:methionine adenosyltransferase activity"/>
    <property type="evidence" value="ECO:0007669"/>
    <property type="project" value="UniProtKB-UniRule"/>
</dbReference>
<dbReference type="GO" id="GO:0006730">
    <property type="term" value="P:one-carbon metabolic process"/>
    <property type="evidence" value="ECO:0007669"/>
    <property type="project" value="UniProtKB-KW"/>
</dbReference>
<dbReference type="GO" id="GO:0006556">
    <property type="term" value="P:S-adenosylmethionine biosynthetic process"/>
    <property type="evidence" value="ECO:0007669"/>
    <property type="project" value="UniProtKB-UniRule"/>
</dbReference>
<dbReference type="CDD" id="cd18079">
    <property type="entry name" value="S-AdoMet_synt"/>
    <property type="match status" value="1"/>
</dbReference>
<dbReference type="FunFam" id="3.30.300.10:FF:000003">
    <property type="entry name" value="S-adenosylmethionine synthase"/>
    <property type="match status" value="1"/>
</dbReference>
<dbReference type="FunFam" id="3.30.300.10:FF:000004">
    <property type="entry name" value="S-adenosylmethionine synthase"/>
    <property type="match status" value="1"/>
</dbReference>
<dbReference type="Gene3D" id="3.30.300.10">
    <property type="match status" value="3"/>
</dbReference>
<dbReference type="HAMAP" id="MF_00086">
    <property type="entry name" value="S_AdoMet_synth1"/>
    <property type="match status" value="1"/>
</dbReference>
<dbReference type="InterPro" id="IPR022631">
    <property type="entry name" value="ADOMET_SYNTHASE_CS"/>
</dbReference>
<dbReference type="InterPro" id="IPR022630">
    <property type="entry name" value="S-AdoMet_synt_C"/>
</dbReference>
<dbReference type="InterPro" id="IPR022629">
    <property type="entry name" value="S-AdoMet_synt_central"/>
</dbReference>
<dbReference type="InterPro" id="IPR022628">
    <property type="entry name" value="S-AdoMet_synt_N"/>
</dbReference>
<dbReference type="InterPro" id="IPR002133">
    <property type="entry name" value="S-AdoMet_synthetase"/>
</dbReference>
<dbReference type="InterPro" id="IPR022636">
    <property type="entry name" value="S-AdoMet_synthetase_sfam"/>
</dbReference>
<dbReference type="NCBIfam" id="TIGR01034">
    <property type="entry name" value="metK"/>
    <property type="match status" value="1"/>
</dbReference>
<dbReference type="PANTHER" id="PTHR11964">
    <property type="entry name" value="S-ADENOSYLMETHIONINE SYNTHETASE"/>
    <property type="match status" value="1"/>
</dbReference>
<dbReference type="Pfam" id="PF02773">
    <property type="entry name" value="S-AdoMet_synt_C"/>
    <property type="match status" value="1"/>
</dbReference>
<dbReference type="Pfam" id="PF02772">
    <property type="entry name" value="S-AdoMet_synt_M"/>
    <property type="match status" value="1"/>
</dbReference>
<dbReference type="Pfam" id="PF00438">
    <property type="entry name" value="S-AdoMet_synt_N"/>
    <property type="match status" value="1"/>
</dbReference>
<dbReference type="PIRSF" id="PIRSF000497">
    <property type="entry name" value="MAT"/>
    <property type="match status" value="1"/>
</dbReference>
<dbReference type="SUPFAM" id="SSF55973">
    <property type="entry name" value="S-adenosylmethionine synthetase"/>
    <property type="match status" value="3"/>
</dbReference>
<dbReference type="PROSITE" id="PS00376">
    <property type="entry name" value="ADOMET_SYNTHASE_1"/>
    <property type="match status" value="1"/>
</dbReference>
<dbReference type="PROSITE" id="PS00377">
    <property type="entry name" value="ADOMET_SYNTHASE_2"/>
    <property type="match status" value="1"/>
</dbReference>
<feature type="chain" id="PRO_1000007930" description="S-adenosylmethionine synthase">
    <location>
        <begin position="1"/>
        <end position="395"/>
    </location>
</feature>
<feature type="region of interest" description="Flexible loop" evidence="1">
    <location>
        <begin position="100"/>
        <end position="110"/>
    </location>
</feature>
<feature type="binding site" description="in other chain" evidence="1">
    <location>
        <position position="16"/>
    </location>
    <ligand>
        <name>ATP</name>
        <dbReference type="ChEBI" id="CHEBI:30616"/>
        <note>ligand shared between two neighboring subunits</note>
    </ligand>
</feature>
<feature type="binding site" evidence="1">
    <location>
        <position position="18"/>
    </location>
    <ligand>
        <name>Mg(2+)</name>
        <dbReference type="ChEBI" id="CHEBI:18420"/>
    </ligand>
</feature>
<feature type="binding site" evidence="1">
    <location>
        <position position="44"/>
    </location>
    <ligand>
        <name>K(+)</name>
        <dbReference type="ChEBI" id="CHEBI:29103"/>
    </ligand>
</feature>
<feature type="binding site" description="in other chain" evidence="1">
    <location>
        <position position="57"/>
    </location>
    <ligand>
        <name>L-methionine</name>
        <dbReference type="ChEBI" id="CHEBI:57844"/>
        <note>ligand shared between two neighboring subunits</note>
    </ligand>
</feature>
<feature type="binding site" description="in other chain" evidence="1">
    <location>
        <position position="100"/>
    </location>
    <ligand>
        <name>L-methionine</name>
        <dbReference type="ChEBI" id="CHEBI:57844"/>
        <note>ligand shared between two neighboring subunits</note>
    </ligand>
</feature>
<feature type="binding site" description="in other chain" evidence="1">
    <location>
        <begin position="167"/>
        <end position="169"/>
    </location>
    <ligand>
        <name>ATP</name>
        <dbReference type="ChEBI" id="CHEBI:30616"/>
        <note>ligand shared between two neighboring subunits</note>
    </ligand>
</feature>
<feature type="binding site" description="in other chain" evidence="1">
    <location>
        <begin position="233"/>
        <end position="234"/>
    </location>
    <ligand>
        <name>ATP</name>
        <dbReference type="ChEBI" id="CHEBI:30616"/>
        <note>ligand shared between two neighboring subunits</note>
    </ligand>
</feature>
<feature type="binding site" evidence="1">
    <location>
        <position position="242"/>
    </location>
    <ligand>
        <name>ATP</name>
        <dbReference type="ChEBI" id="CHEBI:30616"/>
        <note>ligand shared between two neighboring subunits</note>
    </ligand>
</feature>
<feature type="binding site" evidence="1">
    <location>
        <position position="242"/>
    </location>
    <ligand>
        <name>L-methionine</name>
        <dbReference type="ChEBI" id="CHEBI:57844"/>
        <note>ligand shared between two neighboring subunits</note>
    </ligand>
</feature>
<feature type="binding site" description="in other chain" evidence="1">
    <location>
        <begin position="248"/>
        <end position="249"/>
    </location>
    <ligand>
        <name>ATP</name>
        <dbReference type="ChEBI" id="CHEBI:30616"/>
        <note>ligand shared between two neighboring subunits</note>
    </ligand>
</feature>
<feature type="binding site" evidence="1">
    <location>
        <position position="265"/>
    </location>
    <ligand>
        <name>ATP</name>
        <dbReference type="ChEBI" id="CHEBI:30616"/>
        <note>ligand shared between two neighboring subunits</note>
    </ligand>
</feature>
<feature type="binding site" evidence="1">
    <location>
        <position position="269"/>
    </location>
    <ligand>
        <name>ATP</name>
        <dbReference type="ChEBI" id="CHEBI:30616"/>
        <note>ligand shared between two neighboring subunits</note>
    </ligand>
</feature>
<feature type="binding site" description="in other chain" evidence="1">
    <location>
        <position position="273"/>
    </location>
    <ligand>
        <name>L-methionine</name>
        <dbReference type="ChEBI" id="CHEBI:57844"/>
        <note>ligand shared between two neighboring subunits</note>
    </ligand>
</feature>
<evidence type="ECO:0000255" key="1">
    <source>
        <dbReference type="HAMAP-Rule" id="MF_00086"/>
    </source>
</evidence>
<gene>
    <name evidence="1" type="primary">metK</name>
    <name type="ordered locus">BURPS668_0199</name>
</gene>
<organism>
    <name type="scientific">Burkholderia pseudomallei (strain 668)</name>
    <dbReference type="NCBI Taxonomy" id="320373"/>
    <lineage>
        <taxon>Bacteria</taxon>
        <taxon>Pseudomonadati</taxon>
        <taxon>Pseudomonadota</taxon>
        <taxon>Betaproteobacteria</taxon>
        <taxon>Burkholderiales</taxon>
        <taxon>Burkholderiaceae</taxon>
        <taxon>Burkholderia</taxon>
        <taxon>pseudomallei group</taxon>
    </lineage>
</organism>
<sequence length="395" mass="42641">MANDYLFTSESVSEGHPDKVADQISDAILDAILAQDKYSRVAAETLCNTGLVVLAGEITTTANIDYIQIARDTIKRIGYDNTDYGIDYRGCAVLVAYDKQSPDIAQGVDRAHDNNLDQGAGDQGLMFGYACDETPELMPLPIHLSHRLVERQANLRRDGRLPWLRPDAKSQVTVRYVDGKPHSIDTVVLSTQHAPEIDLPALREAVIEEVIKPTLPADLIKGDIKFLVNPTGRFVIGGPQGDCGLTGRKIIVDTYGGAAPHGGGAFSGKDPSKVDRSAAYAGRYVAKNIVAAGLASRALIQVSYAIGVAEPTSVMVNTFGTGRVSDETITKLVREHFDLRPKGIIQMLDLLRPIYEKTAAYGHFGREEPEFSWEAADKALALAEAAGVEPAVQVA</sequence>
<keyword id="KW-0067">ATP-binding</keyword>
<keyword id="KW-0963">Cytoplasm</keyword>
<keyword id="KW-0460">Magnesium</keyword>
<keyword id="KW-0479">Metal-binding</keyword>
<keyword id="KW-0547">Nucleotide-binding</keyword>
<keyword id="KW-0554">One-carbon metabolism</keyword>
<keyword id="KW-0630">Potassium</keyword>
<keyword id="KW-0808">Transferase</keyword>
<name>METK_BURP6</name>
<comment type="function">
    <text evidence="1">Catalyzes the formation of S-adenosylmethionine (AdoMet) from methionine and ATP. The overall synthetic reaction is composed of two sequential steps, AdoMet formation and the subsequent tripolyphosphate hydrolysis which occurs prior to release of AdoMet from the enzyme.</text>
</comment>
<comment type="catalytic activity">
    <reaction evidence="1">
        <text>L-methionine + ATP + H2O = S-adenosyl-L-methionine + phosphate + diphosphate</text>
        <dbReference type="Rhea" id="RHEA:21080"/>
        <dbReference type="ChEBI" id="CHEBI:15377"/>
        <dbReference type="ChEBI" id="CHEBI:30616"/>
        <dbReference type="ChEBI" id="CHEBI:33019"/>
        <dbReference type="ChEBI" id="CHEBI:43474"/>
        <dbReference type="ChEBI" id="CHEBI:57844"/>
        <dbReference type="ChEBI" id="CHEBI:59789"/>
        <dbReference type="EC" id="2.5.1.6"/>
    </reaction>
</comment>
<comment type="cofactor">
    <cofactor evidence="1">
        <name>Mg(2+)</name>
        <dbReference type="ChEBI" id="CHEBI:18420"/>
    </cofactor>
    <text evidence="1">Binds 2 divalent ions per subunit.</text>
</comment>
<comment type="cofactor">
    <cofactor evidence="1">
        <name>K(+)</name>
        <dbReference type="ChEBI" id="CHEBI:29103"/>
    </cofactor>
    <text evidence="1">Binds 1 potassium ion per subunit.</text>
</comment>
<comment type="pathway">
    <text evidence="1">Amino-acid biosynthesis; S-adenosyl-L-methionine biosynthesis; S-adenosyl-L-methionine from L-methionine: step 1/1.</text>
</comment>
<comment type="subunit">
    <text evidence="1">Homotetramer; dimer of dimers.</text>
</comment>
<comment type="subcellular location">
    <subcellularLocation>
        <location evidence="1">Cytoplasm</location>
    </subcellularLocation>
</comment>
<comment type="similarity">
    <text evidence="1">Belongs to the AdoMet synthase family.</text>
</comment>
<reference key="1">
    <citation type="journal article" date="2010" name="Genome Biol. Evol.">
        <title>Continuing evolution of Burkholderia mallei through genome reduction and large-scale rearrangements.</title>
        <authorList>
            <person name="Losada L."/>
            <person name="Ronning C.M."/>
            <person name="DeShazer D."/>
            <person name="Woods D."/>
            <person name="Fedorova N."/>
            <person name="Kim H.S."/>
            <person name="Shabalina S.A."/>
            <person name="Pearson T.R."/>
            <person name="Brinkac L."/>
            <person name="Tan P."/>
            <person name="Nandi T."/>
            <person name="Crabtree J."/>
            <person name="Badger J."/>
            <person name="Beckstrom-Sternberg S."/>
            <person name="Saqib M."/>
            <person name="Schutzer S.E."/>
            <person name="Keim P."/>
            <person name="Nierman W.C."/>
        </authorList>
    </citation>
    <scope>NUCLEOTIDE SEQUENCE [LARGE SCALE GENOMIC DNA]</scope>
    <source>
        <strain>668</strain>
    </source>
</reference>
<accession>A3N4I1</accession>